<reference key="1">
    <citation type="journal article" date="2008" name="Genome Res.">
        <title>Comparative genome analysis of Salmonella enteritidis PT4 and Salmonella gallinarum 287/91 provides insights into evolutionary and host adaptation pathways.</title>
        <authorList>
            <person name="Thomson N.R."/>
            <person name="Clayton D.J."/>
            <person name="Windhorst D."/>
            <person name="Vernikos G."/>
            <person name="Davidson S."/>
            <person name="Churcher C."/>
            <person name="Quail M.A."/>
            <person name="Stevens M."/>
            <person name="Jones M.A."/>
            <person name="Watson M."/>
            <person name="Barron A."/>
            <person name="Layton A."/>
            <person name="Pickard D."/>
            <person name="Kingsley R.A."/>
            <person name="Bignell A."/>
            <person name="Clark L."/>
            <person name="Harris B."/>
            <person name="Ormond D."/>
            <person name="Abdellah Z."/>
            <person name="Brooks K."/>
            <person name="Cherevach I."/>
            <person name="Chillingworth T."/>
            <person name="Woodward J."/>
            <person name="Norberczak H."/>
            <person name="Lord A."/>
            <person name="Arrowsmith C."/>
            <person name="Jagels K."/>
            <person name="Moule S."/>
            <person name="Mungall K."/>
            <person name="Saunders M."/>
            <person name="Whitehead S."/>
            <person name="Chabalgoity J.A."/>
            <person name="Maskell D."/>
            <person name="Humphreys T."/>
            <person name="Roberts M."/>
            <person name="Barrow P.A."/>
            <person name="Dougan G."/>
            <person name="Parkhill J."/>
        </authorList>
    </citation>
    <scope>NUCLEOTIDE SEQUENCE [LARGE SCALE GENOMIC DNA]</scope>
    <source>
        <strain>287/91 / NCTC 13346</strain>
    </source>
</reference>
<organism>
    <name type="scientific">Salmonella gallinarum (strain 287/91 / NCTC 13346)</name>
    <dbReference type="NCBI Taxonomy" id="550538"/>
    <lineage>
        <taxon>Bacteria</taxon>
        <taxon>Pseudomonadati</taxon>
        <taxon>Pseudomonadota</taxon>
        <taxon>Gammaproteobacteria</taxon>
        <taxon>Enterobacterales</taxon>
        <taxon>Enterobacteriaceae</taxon>
        <taxon>Salmonella</taxon>
    </lineage>
</organism>
<name>PDXH_SALG2</name>
<accession>B5RAL1</accession>
<sequence length="218" mass="25499">MSDNDQLQQIAHLRREYTKGGLRRRDLPAEPLTLFERWLGQACDARLADPTAMVVATVDDKGQPYQRIVLLKHYDEKGLVFYTNLGSRKAHQIEHNPRISLLFPWHMLERQVMVTGKAERLSTLEVVRYFHSRPRDSQIGAWVSKQSSRISARGILESKFLELKQKFQQGEVPLPSFWGGFRVSIEQMEFWQGGEHRLHDRFLYQRDDGAWKIDRLAP</sequence>
<dbReference type="EC" id="1.4.3.5" evidence="1"/>
<dbReference type="EMBL" id="AM933173">
    <property type="protein sequence ID" value="CAR37529.1"/>
    <property type="molecule type" value="Genomic_DNA"/>
</dbReference>
<dbReference type="RefSeq" id="WP_001282334.1">
    <property type="nucleotide sequence ID" value="NC_011274.1"/>
</dbReference>
<dbReference type="SMR" id="B5RAL1"/>
<dbReference type="KEGG" id="seg:SG1670"/>
<dbReference type="HOGENOM" id="CLU_032263_2_2_6"/>
<dbReference type="UniPathway" id="UPA01068">
    <property type="reaction ID" value="UER00304"/>
</dbReference>
<dbReference type="UniPathway" id="UPA01068">
    <property type="reaction ID" value="UER00305"/>
</dbReference>
<dbReference type="Proteomes" id="UP000008321">
    <property type="component" value="Chromosome"/>
</dbReference>
<dbReference type="GO" id="GO:0010181">
    <property type="term" value="F:FMN binding"/>
    <property type="evidence" value="ECO:0007669"/>
    <property type="project" value="UniProtKB-UniRule"/>
</dbReference>
<dbReference type="GO" id="GO:0004733">
    <property type="term" value="F:pyridoxamine phosphate oxidase activity"/>
    <property type="evidence" value="ECO:0007669"/>
    <property type="project" value="UniProtKB-UniRule"/>
</dbReference>
<dbReference type="GO" id="GO:0008615">
    <property type="term" value="P:pyridoxine biosynthetic process"/>
    <property type="evidence" value="ECO:0007669"/>
    <property type="project" value="UniProtKB-KW"/>
</dbReference>
<dbReference type="FunFam" id="2.30.110.10:FF:000001">
    <property type="entry name" value="Pyridoxine/pyridoxamine 5'-phosphate oxidase"/>
    <property type="match status" value="1"/>
</dbReference>
<dbReference type="Gene3D" id="2.30.110.10">
    <property type="entry name" value="Electron Transport, Fmn-binding Protein, Chain A"/>
    <property type="match status" value="1"/>
</dbReference>
<dbReference type="HAMAP" id="MF_01629">
    <property type="entry name" value="PdxH"/>
    <property type="match status" value="1"/>
</dbReference>
<dbReference type="InterPro" id="IPR000659">
    <property type="entry name" value="Pyridox_Oxase"/>
</dbReference>
<dbReference type="InterPro" id="IPR019740">
    <property type="entry name" value="Pyridox_Oxase_CS"/>
</dbReference>
<dbReference type="InterPro" id="IPR011576">
    <property type="entry name" value="Pyridox_Oxase_N"/>
</dbReference>
<dbReference type="InterPro" id="IPR019576">
    <property type="entry name" value="Pyridoxamine_oxidase_dimer_C"/>
</dbReference>
<dbReference type="InterPro" id="IPR012349">
    <property type="entry name" value="Split_barrel_FMN-bd"/>
</dbReference>
<dbReference type="NCBIfam" id="TIGR00558">
    <property type="entry name" value="pdxH"/>
    <property type="match status" value="1"/>
</dbReference>
<dbReference type="NCBIfam" id="NF004231">
    <property type="entry name" value="PRK05679.1"/>
    <property type="match status" value="1"/>
</dbReference>
<dbReference type="PANTHER" id="PTHR10851:SF0">
    <property type="entry name" value="PYRIDOXINE-5'-PHOSPHATE OXIDASE"/>
    <property type="match status" value="1"/>
</dbReference>
<dbReference type="PANTHER" id="PTHR10851">
    <property type="entry name" value="PYRIDOXINE-5-PHOSPHATE OXIDASE"/>
    <property type="match status" value="1"/>
</dbReference>
<dbReference type="Pfam" id="PF10590">
    <property type="entry name" value="PNP_phzG_C"/>
    <property type="match status" value="1"/>
</dbReference>
<dbReference type="Pfam" id="PF01243">
    <property type="entry name" value="PNPOx_N"/>
    <property type="match status" value="1"/>
</dbReference>
<dbReference type="PIRSF" id="PIRSF000190">
    <property type="entry name" value="Pyd_amn-ph_oxd"/>
    <property type="match status" value="1"/>
</dbReference>
<dbReference type="SUPFAM" id="SSF50475">
    <property type="entry name" value="FMN-binding split barrel"/>
    <property type="match status" value="1"/>
</dbReference>
<dbReference type="PROSITE" id="PS01064">
    <property type="entry name" value="PYRIDOX_OXIDASE"/>
    <property type="match status" value="1"/>
</dbReference>
<proteinExistence type="inferred from homology"/>
<gene>
    <name evidence="1" type="primary">pdxH</name>
    <name type="ordered locus">SG1670</name>
</gene>
<feature type="chain" id="PRO_1000186335" description="Pyridoxine/pyridoxamine 5'-phosphate oxidase">
    <location>
        <begin position="1"/>
        <end position="218"/>
    </location>
</feature>
<feature type="binding site" evidence="1">
    <location>
        <begin position="14"/>
        <end position="17"/>
    </location>
    <ligand>
        <name>substrate</name>
    </ligand>
</feature>
<feature type="binding site" evidence="1">
    <location>
        <begin position="67"/>
        <end position="72"/>
    </location>
    <ligand>
        <name>FMN</name>
        <dbReference type="ChEBI" id="CHEBI:58210"/>
    </ligand>
</feature>
<feature type="binding site" evidence="1">
    <location>
        <position position="72"/>
    </location>
    <ligand>
        <name>substrate</name>
    </ligand>
</feature>
<feature type="binding site" evidence="1">
    <location>
        <begin position="82"/>
        <end position="83"/>
    </location>
    <ligand>
        <name>FMN</name>
        <dbReference type="ChEBI" id="CHEBI:58210"/>
    </ligand>
</feature>
<feature type="binding site" evidence="1">
    <location>
        <position position="88"/>
    </location>
    <ligand>
        <name>FMN</name>
        <dbReference type="ChEBI" id="CHEBI:58210"/>
    </ligand>
</feature>
<feature type="binding site" evidence="1">
    <location>
        <position position="89"/>
    </location>
    <ligand>
        <name>FMN</name>
        <dbReference type="ChEBI" id="CHEBI:58210"/>
    </ligand>
</feature>
<feature type="binding site" evidence="1">
    <location>
        <position position="111"/>
    </location>
    <ligand>
        <name>FMN</name>
        <dbReference type="ChEBI" id="CHEBI:58210"/>
    </ligand>
</feature>
<feature type="binding site" evidence="1">
    <location>
        <position position="129"/>
    </location>
    <ligand>
        <name>substrate</name>
    </ligand>
</feature>
<feature type="binding site" evidence="1">
    <location>
        <position position="133"/>
    </location>
    <ligand>
        <name>substrate</name>
    </ligand>
</feature>
<feature type="binding site" evidence="1">
    <location>
        <position position="137"/>
    </location>
    <ligand>
        <name>substrate</name>
    </ligand>
</feature>
<feature type="binding site" evidence="1">
    <location>
        <begin position="146"/>
        <end position="147"/>
    </location>
    <ligand>
        <name>FMN</name>
        <dbReference type="ChEBI" id="CHEBI:58210"/>
    </ligand>
</feature>
<feature type="binding site" evidence="1">
    <location>
        <position position="191"/>
    </location>
    <ligand>
        <name>FMN</name>
        <dbReference type="ChEBI" id="CHEBI:58210"/>
    </ligand>
</feature>
<feature type="binding site" evidence="1">
    <location>
        <begin position="197"/>
        <end position="199"/>
    </location>
    <ligand>
        <name>substrate</name>
    </ligand>
</feature>
<feature type="binding site" evidence="1">
    <location>
        <position position="201"/>
    </location>
    <ligand>
        <name>FMN</name>
        <dbReference type="ChEBI" id="CHEBI:58210"/>
    </ligand>
</feature>
<evidence type="ECO:0000255" key="1">
    <source>
        <dbReference type="HAMAP-Rule" id="MF_01629"/>
    </source>
</evidence>
<keyword id="KW-0285">Flavoprotein</keyword>
<keyword id="KW-0288">FMN</keyword>
<keyword id="KW-0560">Oxidoreductase</keyword>
<keyword id="KW-0664">Pyridoxine biosynthesis</keyword>
<protein>
    <recommendedName>
        <fullName evidence="1">Pyridoxine/pyridoxamine 5'-phosphate oxidase</fullName>
        <ecNumber evidence="1">1.4.3.5</ecNumber>
    </recommendedName>
    <alternativeName>
        <fullName evidence="1">PNP/PMP oxidase</fullName>
        <shortName evidence="1">PNPOx</shortName>
    </alternativeName>
    <alternativeName>
        <fullName evidence="1">Pyridoxal 5'-phosphate synthase</fullName>
    </alternativeName>
</protein>
<comment type="function">
    <text evidence="1">Catalyzes the oxidation of either pyridoxine 5'-phosphate (PNP) or pyridoxamine 5'-phosphate (PMP) into pyridoxal 5'-phosphate (PLP).</text>
</comment>
<comment type="catalytic activity">
    <reaction evidence="1">
        <text>pyridoxamine 5'-phosphate + O2 + H2O = pyridoxal 5'-phosphate + H2O2 + NH4(+)</text>
        <dbReference type="Rhea" id="RHEA:15817"/>
        <dbReference type="ChEBI" id="CHEBI:15377"/>
        <dbReference type="ChEBI" id="CHEBI:15379"/>
        <dbReference type="ChEBI" id="CHEBI:16240"/>
        <dbReference type="ChEBI" id="CHEBI:28938"/>
        <dbReference type="ChEBI" id="CHEBI:58451"/>
        <dbReference type="ChEBI" id="CHEBI:597326"/>
        <dbReference type="EC" id="1.4.3.5"/>
    </reaction>
</comment>
<comment type="catalytic activity">
    <reaction evidence="1">
        <text>pyridoxine 5'-phosphate + O2 = pyridoxal 5'-phosphate + H2O2</text>
        <dbReference type="Rhea" id="RHEA:15149"/>
        <dbReference type="ChEBI" id="CHEBI:15379"/>
        <dbReference type="ChEBI" id="CHEBI:16240"/>
        <dbReference type="ChEBI" id="CHEBI:58589"/>
        <dbReference type="ChEBI" id="CHEBI:597326"/>
        <dbReference type="EC" id="1.4.3.5"/>
    </reaction>
</comment>
<comment type="cofactor">
    <cofactor evidence="1">
        <name>FMN</name>
        <dbReference type="ChEBI" id="CHEBI:58210"/>
    </cofactor>
    <text evidence="1">Binds 1 FMN per subunit.</text>
</comment>
<comment type="pathway">
    <text evidence="1">Cofactor metabolism; pyridoxal 5'-phosphate salvage; pyridoxal 5'-phosphate from pyridoxamine 5'-phosphate: step 1/1.</text>
</comment>
<comment type="pathway">
    <text evidence="1">Cofactor metabolism; pyridoxal 5'-phosphate salvage; pyridoxal 5'-phosphate from pyridoxine 5'-phosphate: step 1/1.</text>
</comment>
<comment type="subunit">
    <text evidence="1">Homodimer.</text>
</comment>
<comment type="similarity">
    <text evidence="1">Belongs to the pyridoxamine 5'-phosphate oxidase family.</text>
</comment>